<reference key="1">
    <citation type="journal article" date="1990" name="Mol. Cell. Biol.">
        <title>Highly conserved upstream regions of the alpha 1-antitrypsin gene in two mouse species govern liver-specific expression by different mechanisms.</title>
        <authorList>
            <person name="Latimer J.J."/>
            <person name="Berger F.G."/>
            <person name="Baumann H."/>
        </authorList>
    </citation>
    <scope>NUCLEOTIDE SEQUENCE [MRNA]</scope>
</reference>
<gene>
    <name type="primary">Serpina1</name>
</gene>
<keyword id="KW-0325">Glycoprotein</keyword>
<keyword id="KW-0597">Phosphoprotein</keyword>
<keyword id="KW-0646">Protease inhibitor</keyword>
<keyword id="KW-0964">Secreted</keyword>
<keyword id="KW-0722">Serine protease inhibitor</keyword>
<keyword id="KW-0732">Signal</keyword>
<sequence>MTPSISWGLLLLAGLFCLVPSFLAEDVQETDTSRRDSVPASHDTPYNLELSISLYRELGHKSTTSNIFFSQVSIATAFAMLSLGEKGDTHTQILEGLQFNLTQTSEADIHKAFQHLLQTLNRPDSELQLSTGNGSLLNNDLKLVEKFLEEAKNNYHSEVFSVNFAESEEAKKVINDFVEKGTQGKIAEAVKDPDEDTVFALANYILFKGKWKKPFDPKHTEEAEFHVDTVTTVKVPMMTLTGMLDVHHCSTLSSWVLLMDYLGNRTAVFLLPDDGKMQHLEQTLNKELISKFLLNRHRRLAQVHLPRLSLSGNYTLNTLMSHLGITRIFNNGADLSGITEENAPLKLSKAADKAVLTMDETGTEAAAATVLQAVPMSMPPILNFNKPFIFIIVEEHTQSPLFVGKVVDPTRK</sequence>
<comment type="function">
    <text>Inhibitor of serine proteases. Its primary target is elastase, but it also has a moderate affinity for plasmin and thrombin.</text>
</comment>
<comment type="subunit">
    <text evidence="2">Interacts with CELA2A (By similarity). Interacts with ERGIC3 and LMAN1/ERGIC53 (By similarity). Interacts with PRSS1/Trypsin (By similarity).</text>
</comment>
<comment type="subcellular location">
    <subcellularLocation>
        <location>Secreted</location>
    </subcellularLocation>
</comment>
<comment type="tissue specificity">
    <text>Expressed not only in liver but also in kidney tubule cells, where it is regulated by androgens during development.</text>
</comment>
<comment type="domain">
    <text evidence="1">The reactive center loop (RCL) extends out from the body of the protein and directs binding to the target protease. The protease cleaves the serpin at the reactive site within the RCL, establishing a covalent linkage between the carboxyl group of the serpin reactive site and the serine hydroxyl of the protease. The resulting inactive serpin-protease complex is highly stable (By similarity).</text>
</comment>
<comment type="similarity">
    <text evidence="4">Belongs to the serpin family.</text>
</comment>
<feature type="signal peptide">
    <location>
        <begin position="1"/>
        <end position="24"/>
    </location>
</feature>
<feature type="chain" id="PRO_0000032394" description="Alpha-1-antiproteinase">
    <location>
        <begin position="25"/>
        <end position="412"/>
    </location>
</feature>
<feature type="region of interest" description="RCL">
    <location>
        <begin position="367"/>
        <end position="386"/>
    </location>
</feature>
<feature type="site" description="Reactive bond" evidence="1">
    <location>
        <begin position="376"/>
        <end position="377"/>
    </location>
</feature>
<feature type="modified residue" description="Phosphoserine" evidence="2">
    <location>
        <position position="33"/>
    </location>
</feature>
<feature type="modified residue" description="Phosphoserine" evidence="2">
    <location>
        <position position="377"/>
    </location>
</feature>
<feature type="glycosylation site" description="N-linked (GlcNAc...) asparagine" evidence="3">
    <location>
        <position position="100"/>
    </location>
</feature>
<feature type="glycosylation site" description="N-linked (GlcNAc...) asparagine" evidence="3">
    <location>
        <position position="133"/>
    </location>
</feature>
<feature type="glycosylation site" description="N-linked (GlcNAc...) asparagine" evidence="3">
    <location>
        <position position="264"/>
    </location>
</feature>
<feature type="glycosylation site" description="N-linked (GlcNAc...) asparagine" evidence="3">
    <location>
        <position position="313"/>
    </location>
</feature>
<proteinExistence type="evidence at transcript level"/>
<accession>P26595</accession>
<name>A1AT_MUSCR</name>
<protein>
    <recommendedName>
        <fullName>Alpha-1-antiproteinase</fullName>
    </recommendedName>
    <alternativeName>
        <fullName>Alpha-1-antitrypsin</fullName>
        <shortName>AAT</shortName>
    </alternativeName>
    <alternativeName>
        <fullName>Alpha-1-proteinase inhibitor</fullName>
    </alternativeName>
    <alternativeName>
        <fullName>Serpin A1</fullName>
    </alternativeName>
</protein>
<organism>
    <name type="scientific">Mus caroli</name>
    <name type="common">Ryukyu mouse</name>
    <name type="synonym">Ricefield mouse</name>
    <dbReference type="NCBI Taxonomy" id="10089"/>
    <lineage>
        <taxon>Eukaryota</taxon>
        <taxon>Metazoa</taxon>
        <taxon>Chordata</taxon>
        <taxon>Craniata</taxon>
        <taxon>Vertebrata</taxon>
        <taxon>Euteleostomi</taxon>
        <taxon>Mammalia</taxon>
        <taxon>Eutheria</taxon>
        <taxon>Euarchontoglires</taxon>
        <taxon>Glires</taxon>
        <taxon>Rodentia</taxon>
        <taxon>Myomorpha</taxon>
        <taxon>Muroidea</taxon>
        <taxon>Muridae</taxon>
        <taxon>Murinae</taxon>
        <taxon>Mus</taxon>
        <taxon>Mus</taxon>
    </lineage>
</organism>
<evidence type="ECO:0000250" key="1"/>
<evidence type="ECO:0000250" key="2">
    <source>
        <dbReference type="UniProtKB" id="P01009"/>
    </source>
</evidence>
<evidence type="ECO:0000255" key="3"/>
<evidence type="ECO:0000305" key="4"/>
<dbReference type="EMBL" id="M33567">
    <property type="protein sequence ID" value="AAA37128.1"/>
    <property type="molecule type" value="mRNA"/>
</dbReference>
<dbReference type="PIR" id="A34730">
    <property type="entry name" value="ITMSC"/>
</dbReference>
<dbReference type="SMR" id="P26595"/>
<dbReference type="ChEMBL" id="CHEMBL1795142"/>
<dbReference type="MEROPS" id="I04.001"/>
<dbReference type="GlyCosmos" id="P26595">
    <property type="glycosylation" value="4 sites, No reported glycans"/>
</dbReference>
<dbReference type="MGI" id="MGI:98376">
    <property type="gene designation" value="Serpina1"/>
</dbReference>
<dbReference type="Proteomes" id="UP000515126">
    <property type="component" value="Unplaced"/>
</dbReference>
<dbReference type="GO" id="GO:0005615">
    <property type="term" value="C:extracellular space"/>
    <property type="evidence" value="ECO:0007669"/>
    <property type="project" value="InterPro"/>
</dbReference>
<dbReference type="GO" id="GO:0004867">
    <property type="term" value="F:serine-type endopeptidase inhibitor activity"/>
    <property type="evidence" value="ECO:0007669"/>
    <property type="project" value="UniProtKB-KW"/>
</dbReference>
<dbReference type="GO" id="GO:0034097">
    <property type="term" value="P:response to cytokine"/>
    <property type="evidence" value="ECO:0007669"/>
    <property type="project" value="UniProtKB-ARBA"/>
</dbReference>
<dbReference type="GO" id="GO:0043434">
    <property type="term" value="P:response to peptide hormone"/>
    <property type="evidence" value="ECO:0007669"/>
    <property type="project" value="UniProtKB-ARBA"/>
</dbReference>
<dbReference type="CDD" id="cd02056">
    <property type="entry name" value="serpinA1_A1AT"/>
    <property type="match status" value="1"/>
</dbReference>
<dbReference type="FunFam" id="2.30.39.10:FF:000003">
    <property type="entry name" value="alpha-1-antitrypsin isoform X1"/>
    <property type="match status" value="1"/>
</dbReference>
<dbReference type="FunFam" id="3.30.497.10:FF:000001">
    <property type="entry name" value="Serine protease inhibitor"/>
    <property type="match status" value="1"/>
</dbReference>
<dbReference type="FunFam" id="2.10.310.10:FF:000001">
    <property type="entry name" value="Serpin family A member 1"/>
    <property type="match status" value="1"/>
</dbReference>
<dbReference type="Gene3D" id="2.30.39.10">
    <property type="entry name" value="Alpha-1-antitrypsin, domain 1"/>
    <property type="match status" value="1"/>
</dbReference>
<dbReference type="Gene3D" id="3.30.497.10">
    <property type="entry name" value="Antithrombin, subunit I, domain 2"/>
    <property type="match status" value="1"/>
</dbReference>
<dbReference type="Gene3D" id="2.10.310.10">
    <property type="entry name" value="Serpins superfamily"/>
    <property type="match status" value="1"/>
</dbReference>
<dbReference type="InterPro" id="IPR023795">
    <property type="entry name" value="Serpin_CS"/>
</dbReference>
<dbReference type="InterPro" id="IPR023796">
    <property type="entry name" value="Serpin_dom"/>
</dbReference>
<dbReference type="InterPro" id="IPR000215">
    <property type="entry name" value="Serpin_fam"/>
</dbReference>
<dbReference type="InterPro" id="IPR036186">
    <property type="entry name" value="Serpin_sf"/>
</dbReference>
<dbReference type="InterPro" id="IPR042178">
    <property type="entry name" value="Serpin_sf_1"/>
</dbReference>
<dbReference type="InterPro" id="IPR042185">
    <property type="entry name" value="Serpin_sf_2"/>
</dbReference>
<dbReference type="PANTHER" id="PTHR11461:SF165">
    <property type="entry name" value="ALPHA-1-ANTITRYPSIN"/>
    <property type="match status" value="1"/>
</dbReference>
<dbReference type="PANTHER" id="PTHR11461">
    <property type="entry name" value="SERINE PROTEASE INHIBITOR, SERPIN"/>
    <property type="match status" value="1"/>
</dbReference>
<dbReference type="Pfam" id="PF00079">
    <property type="entry name" value="Serpin"/>
    <property type="match status" value="1"/>
</dbReference>
<dbReference type="SMART" id="SM00093">
    <property type="entry name" value="SERPIN"/>
    <property type="match status" value="1"/>
</dbReference>
<dbReference type="SUPFAM" id="SSF56574">
    <property type="entry name" value="Serpins"/>
    <property type="match status" value="1"/>
</dbReference>
<dbReference type="PROSITE" id="PS00284">
    <property type="entry name" value="SERPIN"/>
    <property type="match status" value="1"/>
</dbReference>